<comment type="function">
    <text evidence="1">Part of the ABC transporter complex DrrABC involved in doxorubicin resistance. Responsible for energy coupling to the transport system. Binds ATP (By similarity).</text>
</comment>
<comment type="subunit">
    <text evidence="3">The complex is composed of two ATP-binding proteins (DrrA) and two transmembrane proteins (DrrB and DrrC).</text>
</comment>
<comment type="subcellular location">
    <subcellularLocation>
        <location evidence="1">Cell membrane</location>
        <topology evidence="1">Peripheral membrane protein</topology>
        <orientation evidence="1">Cytoplasmic side</orientation>
    </subcellularLocation>
</comment>
<comment type="similarity">
    <text evidence="3">Belongs to the ABC transporter superfamily. Drug exporter-1 (DrugE1) (TC 3.A.1.105) family.</text>
</comment>
<accession>P9WQL8</accession>
<accession>L0TCP0</accession>
<accession>P96205</accession>
<accession>Q7D6E8</accession>
<keyword id="KW-0046">Antibiotic resistance</keyword>
<keyword id="KW-0067">ATP-binding</keyword>
<keyword id="KW-1003">Cell membrane</keyword>
<keyword id="KW-0472">Membrane</keyword>
<keyword id="KW-0547">Nucleotide-binding</keyword>
<keyword id="KW-1185">Reference proteome</keyword>
<keyword id="KW-1278">Translocase</keyword>
<keyword id="KW-0813">Transport</keyword>
<dbReference type="EC" id="7.6.2.-"/>
<dbReference type="EMBL" id="AE000516">
    <property type="protein sequence ID" value="AAK47333.1"/>
    <property type="molecule type" value="Genomic_DNA"/>
</dbReference>
<dbReference type="PIR" id="D70984">
    <property type="entry name" value="D70984"/>
</dbReference>
<dbReference type="RefSeq" id="WP_003901496.1">
    <property type="nucleotide sequence ID" value="NZ_KK341227.1"/>
</dbReference>
<dbReference type="SMR" id="P9WQL8"/>
<dbReference type="KEGG" id="mtc:MT3006"/>
<dbReference type="PATRIC" id="fig|83331.31.peg.3246"/>
<dbReference type="HOGENOM" id="CLU_000604_1_2_11"/>
<dbReference type="Proteomes" id="UP000001020">
    <property type="component" value="Chromosome"/>
</dbReference>
<dbReference type="GO" id="GO:0005886">
    <property type="term" value="C:plasma membrane"/>
    <property type="evidence" value="ECO:0007669"/>
    <property type="project" value="UniProtKB-SubCell"/>
</dbReference>
<dbReference type="GO" id="GO:0005524">
    <property type="term" value="F:ATP binding"/>
    <property type="evidence" value="ECO:0007669"/>
    <property type="project" value="UniProtKB-KW"/>
</dbReference>
<dbReference type="GO" id="GO:0016887">
    <property type="term" value="F:ATP hydrolysis activity"/>
    <property type="evidence" value="ECO:0007669"/>
    <property type="project" value="InterPro"/>
</dbReference>
<dbReference type="GO" id="GO:0043215">
    <property type="term" value="P:daunorubicin transport"/>
    <property type="evidence" value="ECO:0007669"/>
    <property type="project" value="InterPro"/>
</dbReference>
<dbReference type="GO" id="GO:1900753">
    <property type="term" value="P:doxorubicin transport"/>
    <property type="evidence" value="ECO:0007669"/>
    <property type="project" value="InterPro"/>
</dbReference>
<dbReference type="GO" id="GO:0046677">
    <property type="term" value="P:response to antibiotic"/>
    <property type="evidence" value="ECO:0007669"/>
    <property type="project" value="UniProtKB-KW"/>
</dbReference>
<dbReference type="FunFam" id="3.40.50.300:FF:000589">
    <property type="entry name" value="ABC transporter, ATP-binding subunit"/>
    <property type="match status" value="1"/>
</dbReference>
<dbReference type="Gene3D" id="3.40.50.300">
    <property type="entry name" value="P-loop containing nucleotide triphosphate hydrolases"/>
    <property type="match status" value="1"/>
</dbReference>
<dbReference type="InterPro" id="IPR003593">
    <property type="entry name" value="AAA+_ATPase"/>
</dbReference>
<dbReference type="InterPro" id="IPR003439">
    <property type="entry name" value="ABC_transporter-like_ATP-bd"/>
</dbReference>
<dbReference type="InterPro" id="IPR017871">
    <property type="entry name" value="ABC_transporter-like_CS"/>
</dbReference>
<dbReference type="InterPro" id="IPR050763">
    <property type="entry name" value="ABC_transporter_ATP-binding"/>
</dbReference>
<dbReference type="InterPro" id="IPR005894">
    <property type="entry name" value="DrrA"/>
</dbReference>
<dbReference type="InterPro" id="IPR027417">
    <property type="entry name" value="P-loop_NTPase"/>
</dbReference>
<dbReference type="NCBIfam" id="TIGR01188">
    <property type="entry name" value="drrA"/>
    <property type="match status" value="1"/>
</dbReference>
<dbReference type="PANTHER" id="PTHR42711">
    <property type="entry name" value="ABC TRANSPORTER ATP-BINDING PROTEIN"/>
    <property type="match status" value="1"/>
</dbReference>
<dbReference type="PANTHER" id="PTHR42711:SF19">
    <property type="entry name" value="DOXORUBICIN RESISTANCE ATP-BINDING PROTEIN DRRA"/>
    <property type="match status" value="1"/>
</dbReference>
<dbReference type="Pfam" id="PF00005">
    <property type="entry name" value="ABC_tran"/>
    <property type="match status" value="1"/>
</dbReference>
<dbReference type="SMART" id="SM00382">
    <property type="entry name" value="AAA"/>
    <property type="match status" value="1"/>
</dbReference>
<dbReference type="SUPFAM" id="SSF52540">
    <property type="entry name" value="P-loop containing nucleoside triphosphate hydrolases"/>
    <property type="match status" value="1"/>
</dbReference>
<dbReference type="PROSITE" id="PS00211">
    <property type="entry name" value="ABC_TRANSPORTER_1"/>
    <property type="match status" value="1"/>
</dbReference>
<dbReference type="PROSITE" id="PS50893">
    <property type="entry name" value="ABC_TRANSPORTER_2"/>
    <property type="match status" value="1"/>
</dbReference>
<name>DRRA_MYCTO</name>
<sequence>MRNDDMAVVVNGVRKTYGKGKIVALDDVSFKVRRGEVIGLLGPNGAGKTTMVDILSTLTRPDAGSAIIAGYDVVSEPAGVRRSIMVTGQQVAVDDALSGEQNLVLFGRLWGLSKSAARKRAAELLEQFSLVHAGKRRVGTYSGGMRRRIDIACGLVVQPQVAFLDEPTTGLDPRSRQAIWDLVASFKKLGIATLLTTQYLEEADALSDRIILIDHGIIIAEGTANELKHRAGDTFCEIVPRDLKDLDAIVAALGSLLPEHHRAMLTPDSDRITMPAPDGIRMLVEAARRIDEARIELADIALRRPSLDHVFLAMTTDPTESLTHLVSGSAR</sequence>
<feature type="chain" id="PRO_0000426753" description="Doxorubicin resistance ATP-binding protein DrrA">
    <location>
        <begin position="1"/>
        <end position="331"/>
    </location>
</feature>
<feature type="domain" description="ABC transporter" evidence="2">
    <location>
        <begin position="8"/>
        <end position="240"/>
    </location>
</feature>
<feature type="binding site" evidence="2">
    <location>
        <begin position="42"/>
        <end position="49"/>
    </location>
    <ligand>
        <name>ATP</name>
        <dbReference type="ChEBI" id="CHEBI:30616"/>
    </ligand>
</feature>
<protein>
    <recommendedName>
        <fullName>Doxorubicin resistance ATP-binding protein DrrA</fullName>
        <ecNumber>7.6.2.-</ecNumber>
    </recommendedName>
</protein>
<reference key="1">
    <citation type="journal article" date="2002" name="J. Bacteriol.">
        <title>Whole-genome comparison of Mycobacterium tuberculosis clinical and laboratory strains.</title>
        <authorList>
            <person name="Fleischmann R.D."/>
            <person name="Alland D."/>
            <person name="Eisen J.A."/>
            <person name="Carpenter L."/>
            <person name="White O."/>
            <person name="Peterson J.D."/>
            <person name="DeBoy R.T."/>
            <person name="Dodson R.J."/>
            <person name="Gwinn M.L."/>
            <person name="Haft D.H."/>
            <person name="Hickey E.K."/>
            <person name="Kolonay J.F."/>
            <person name="Nelson W.C."/>
            <person name="Umayam L.A."/>
            <person name="Ermolaeva M.D."/>
            <person name="Salzberg S.L."/>
            <person name="Delcher A."/>
            <person name="Utterback T.R."/>
            <person name="Weidman J.F."/>
            <person name="Khouri H.M."/>
            <person name="Gill J."/>
            <person name="Mikula A."/>
            <person name="Bishai W."/>
            <person name="Jacobs W.R. Jr."/>
            <person name="Venter J.C."/>
            <person name="Fraser C.M."/>
        </authorList>
    </citation>
    <scope>NUCLEOTIDE SEQUENCE [LARGE SCALE GENOMIC DNA]</scope>
    <source>
        <strain>CDC 1551 / Oshkosh</strain>
    </source>
</reference>
<gene>
    <name type="primary">drrA</name>
    <name type="ordered locus">MT3006</name>
</gene>
<organism>
    <name type="scientific">Mycobacterium tuberculosis (strain CDC 1551 / Oshkosh)</name>
    <dbReference type="NCBI Taxonomy" id="83331"/>
    <lineage>
        <taxon>Bacteria</taxon>
        <taxon>Bacillati</taxon>
        <taxon>Actinomycetota</taxon>
        <taxon>Actinomycetes</taxon>
        <taxon>Mycobacteriales</taxon>
        <taxon>Mycobacteriaceae</taxon>
        <taxon>Mycobacterium</taxon>
        <taxon>Mycobacterium tuberculosis complex</taxon>
    </lineage>
</organism>
<proteinExistence type="inferred from homology"/>
<evidence type="ECO:0000250" key="1"/>
<evidence type="ECO:0000255" key="2">
    <source>
        <dbReference type="PROSITE-ProRule" id="PRU00434"/>
    </source>
</evidence>
<evidence type="ECO:0000305" key="3"/>